<feature type="chain" id="PRO_0000096587" description="Male-specific sperm protein Mst87F">
    <location>
        <begin position="1"/>
        <end position="56"/>
    </location>
</feature>
<feature type="sequence variant" description="In strain: MEL01." evidence="2">
    <original>P</original>
    <variation>A</variation>
    <location>
        <position position="16"/>
    </location>
</feature>
<feature type="sequence variant" description="In strain: MEL02 and ZBMEL377.">
    <original>C</original>
    <variation>CGPCC</variation>
    <location>
        <position position="18"/>
    </location>
</feature>
<feature type="sequence variant" description="In strain: ZBMEL131." evidence="1">
    <original>C</original>
    <variation>W</variation>
    <location>
        <position position="31"/>
    </location>
</feature>
<accession>P08175</accession>
<accession>A0ANE9</accession>
<accession>A0ANF2</accession>
<accession>A0ANF8</accession>
<accession>B6IDT2</accession>
<accession>C0MHZ0</accession>
<accession>C0MHZ1</accession>
<accession>Q9VFQ6</accession>
<gene>
    <name type="primary">Mst87F</name>
    <name type="synonym">mst(3)gl-9</name>
    <name type="ORF">CG17956</name>
</gene>
<name>MS87F_DROME</name>
<comment type="interaction">
    <interactant intactId="EBI-131659">
        <id>P08175</id>
    </interactant>
    <interactant intactId="EBI-15110079">
        <id>P23023-2</id>
        <label>dsx</label>
    </interactant>
    <organismsDiffer>false</organismsDiffer>
    <experiments>4</experiments>
</comment>
<comment type="tissue specificity">
    <text>Testis.</text>
</comment>
<comment type="developmental stage">
    <text>Primary spermatocytes.</text>
</comment>
<comment type="domain">
    <text>This protein is mostly composed of repetitive C-G-P motifs.</text>
</comment>
<comment type="similarity">
    <text evidence="3">Belongs to the MST(3)CGP family.</text>
</comment>
<keyword id="KW-0217">Developmental protein</keyword>
<keyword id="KW-0221">Differentiation</keyword>
<keyword id="KW-1185">Reference proteome</keyword>
<keyword id="KW-0677">Repeat</keyword>
<keyword id="KW-0744">Spermatogenesis</keyword>
<organism>
    <name type="scientific">Drosophila melanogaster</name>
    <name type="common">Fruit fly</name>
    <dbReference type="NCBI Taxonomy" id="7227"/>
    <lineage>
        <taxon>Eukaryota</taxon>
        <taxon>Metazoa</taxon>
        <taxon>Ecdysozoa</taxon>
        <taxon>Arthropoda</taxon>
        <taxon>Hexapoda</taxon>
        <taxon>Insecta</taxon>
        <taxon>Pterygota</taxon>
        <taxon>Neoptera</taxon>
        <taxon>Endopterygota</taxon>
        <taxon>Diptera</taxon>
        <taxon>Brachycera</taxon>
        <taxon>Muscomorpha</taxon>
        <taxon>Ephydroidea</taxon>
        <taxon>Drosophilidae</taxon>
        <taxon>Drosophila</taxon>
        <taxon>Sophophora</taxon>
    </lineage>
</organism>
<evidence type="ECO:0000269" key="1">
    <source>
    </source>
</evidence>
<evidence type="ECO:0000269" key="2">
    <source>
    </source>
</evidence>
<evidence type="ECO:0000305" key="3"/>
<proteinExistence type="evidence at protein level"/>
<dbReference type="EMBL" id="Y00831">
    <property type="protein sequence ID" value="CAA68761.1"/>
    <property type="molecule type" value="Genomic_DNA"/>
</dbReference>
<dbReference type="EMBL" id="AM294187">
    <property type="protein sequence ID" value="CAL26091.1"/>
    <property type="molecule type" value="Genomic_DNA"/>
</dbReference>
<dbReference type="EMBL" id="AM294188">
    <property type="protein sequence ID" value="CAL26092.1"/>
    <property type="molecule type" value="Genomic_DNA"/>
</dbReference>
<dbReference type="EMBL" id="AM294189">
    <property type="protein sequence ID" value="CAL26093.1"/>
    <property type="molecule type" value="Genomic_DNA"/>
</dbReference>
<dbReference type="EMBL" id="AM294190">
    <property type="protein sequence ID" value="CAL26094.1"/>
    <property type="molecule type" value="Genomic_DNA"/>
</dbReference>
<dbReference type="EMBL" id="AM294191">
    <property type="protein sequence ID" value="CAL26095.1"/>
    <property type="molecule type" value="Genomic_DNA"/>
</dbReference>
<dbReference type="EMBL" id="AM294192">
    <property type="protein sequence ID" value="CAL26096.1"/>
    <property type="molecule type" value="Genomic_DNA"/>
</dbReference>
<dbReference type="EMBL" id="AM294193">
    <property type="protein sequence ID" value="CAL26097.1"/>
    <property type="molecule type" value="Genomic_DNA"/>
</dbReference>
<dbReference type="EMBL" id="AM294194">
    <property type="protein sequence ID" value="CAL26098.1"/>
    <property type="molecule type" value="Genomic_DNA"/>
</dbReference>
<dbReference type="EMBL" id="AM294195">
    <property type="protein sequence ID" value="CAL26099.1"/>
    <property type="molecule type" value="Genomic_DNA"/>
</dbReference>
<dbReference type="EMBL" id="AM294196">
    <property type="protein sequence ID" value="CAL26100.1"/>
    <property type="molecule type" value="Genomic_DNA"/>
</dbReference>
<dbReference type="EMBL" id="AM294197">
    <property type="protein sequence ID" value="CAL26101.1"/>
    <property type="molecule type" value="Genomic_DNA"/>
</dbReference>
<dbReference type="EMBL" id="AM294198">
    <property type="protein sequence ID" value="CAL26102.1"/>
    <property type="molecule type" value="Genomic_DNA"/>
</dbReference>
<dbReference type="EMBL" id="FM244962">
    <property type="protein sequence ID" value="CAR92888.1"/>
    <property type="molecule type" value="Genomic_DNA"/>
</dbReference>
<dbReference type="EMBL" id="FM244963">
    <property type="protein sequence ID" value="CAR92889.1"/>
    <property type="molecule type" value="Genomic_DNA"/>
</dbReference>
<dbReference type="EMBL" id="FM244964">
    <property type="protein sequence ID" value="CAR92890.1"/>
    <property type="molecule type" value="Genomic_DNA"/>
</dbReference>
<dbReference type="EMBL" id="FM244965">
    <property type="protein sequence ID" value="CAR92891.1"/>
    <property type="molecule type" value="Genomic_DNA"/>
</dbReference>
<dbReference type="EMBL" id="FM244966">
    <property type="protein sequence ID" value="CAR92892.1"/>
    <property type="molecule type" value="Genomic_DNA"/>
</dbReference>
<dbReference type="EMBL" id="FM244967">
    <property type="protein sequence ID" value="CAR92893.1"/>
    <property type="molecule type" value="Genomic_DNA"/>
</dbReference>
<dbReference type="EMBL" id="FM244968">
    <property type="protein sequence ID" value="CAR92894.1"/>
    <property type="molecule type" value="Genomic_DNA"/>
</dbReference>
<dbReference type="EMBL" id="FM244969">
    <property type="protein sequence ID" value="CAR92895.1"/>
    <property type="molecule type" value="Genomic_DNA"/>
</dbReference>
<dbReference type="EMBL" id="FM244970">
    <property type="protein sequence ID" value="CAR92896.1"/>
    <property type="molecule type" value="Genomic_DNA"/>
</dbReference>
<dbReference type="EMBL" id="FM244971">
    <property type="protein sequence ID" value="CAR92897.1"/>
    <property type="molecule type" value="Genomic_DNA"/>
</dbReference>
<dbReference type="EMBL" id="FM244972">
    <property type="protein sequence ID" value="CAR92898.1"/>
    <property type="molecule type" value="Genomic_DNA"/>
</dbReference>
<dbReference type="EMBL" id="FM244973">
    <property type="protein sequence ID" value="CAR92899.1"/>
    <property type="molecule type" value="Genomic_DNA"/>
</dbReference>
<dbReference type="EMBL" id="AE014297">
    <property type="protein sequence ID" value="AAF54994.1"/>
    <property type="molecule type" value="Genomic_DNA"/>
</dbReference>
<dbReference type="EMBL" id="BT050522">
    <property type="protein sequence ID" value="ACJ13229.2"/>
    <property type="molecule type" value="mRNA"/>
</dbReference>
<dbReference type="PIR" id="S00340">
    <property type="entry name" value="WTFF"/>
</dbReference>
<dbReference type="RefSeq" id="NP_001287317.1">
    <property type="nucleotide sequence ID" value="NM_001300388.1"/>
</dbReference>
<dbReference type="RefSeq" id="NP_524346.1">
    <property type="nucleotide sequence ID" value="NM_079622.4"/>
</dbReference>
<dbReference type="BioGRID" id="66771">
    <property type="interactions" value="38"/>
</dbReference>
<dbReference type="DIP" id="DIP-19712N"/>
<dbReference type="IntAct" id="P08175">
    <property type="interactions" value="25"/>
</dbReference>
<dbReference type="DNASU" id="41693"/>
<dbReference type="EnsemblMetazoa" id="FBtr0082884">
    <property type="protein sequence ID" value="FBpp0082347"/>
    <property type="gene ID" value="FBgn0002862"/>
</dbReference>
<dbReference type="EnsemblMetazoa" id="FBtr0346062">
    <property type="protein sequence ID" value="FBpp0311910"/>
    <property type="gene ID" value="FBgn0002862"/>
</dbReference>
<dbReference type="GeneID" id="41693"/>
<dbReference type="KEGG" id="dme:Dmel_CG17956"/>
<dbReference type="AGR" id="FB:FBgn0002862"/>
<dbReference type="CTD" id="41693"/>
<dbReference type="FlyBase" id="FBgn0002862">
    <property type="gene designation" value="Mst87F"/>
</dbReference>
<dbReference type="VEuPathDB" id="VectorBase:FBgn0002862"/>
<dbReference type="HOGENOM" id="CLU_3034555_0_0_1"/>
<dbReference type="InParanoid" id="P08175"/>
<dbReference type="OMA" id="CARIEYY"/>
<dbReference type="BioGRID-ORCS" id="41693">
    <property type="hits" value="0 hits in 1 CRISPR screen"/>
</dbReference>
<dbReference type="ChiTaRS" id="Mst87F">
    <property type="organism name" value="fly"/>
</dbReference>
<dbReference type="GenomeRNAi" id="41693"/>
<dbReference type="PRO" id="PR:P08175"/>
<dbReference type="Proteomes" id="UP000000803">
    <property type="component" value="Chromosome 3R"/>
</dbReference>
<dbReference type="Bgee" id="FBgn0002862">
    <property type="expression patterns" value="Expressed in early-mid elongation-stage spermatid (Drosophila) in testis and 54 other cell types or tissues"/>
</dbReference>
<dbReference type="ExpressionAtlas" id="P08175">
    <property type="expression patterns" value="baseline and differential"/>
</dbReference>
<dbReference type="GO" id="GO:0036126">
    <property type="term" value="C:sperm flagellum"/>
    <property type="evidence" value="ECO:0000314"/>
    <property type="project" value="FlyBase"/>
</dbReference>
<dbReference type="GO" id="GO:0005198">
    <property type="term" value="F:structural molecule activity"/>
    <property type="evidence" value="ECO:0000255"/>
    <property type="project" value="FlyBase"/>
</dbReference>
<dbReference type="GO" id="GO:0030154">
    <property type="term" value="P:cell differentiation"/>
    <property type="evidence" value="ECO:0007669"/>
    <property type="project" value="UniProtKB-KW"/>
</dbReference>
<dbReference type="GO" id="GO:0007283">
    <property type="term" value="P:spermatogenesis"/>
    <property type="evidence" value="ECO:0000270"/>
    <property type="project" value="FlyBase"/>
</dbReference>
<dbReference type="InterPro" id="IPR055083">
    <property type="entry name" value="Mst87F"/>
</dbReference>
<dbReference type="Pfam" id="PF22857">
    <property type="entry name" value="Mst87F"/>
    <property type="match status" value="1"/>
</dbReference>
<sequence length="56" mass="5233">MCCGPCGPCCGPCCGPCCGPCGPCGGGCGPCYGPNVCGPCYACGPCGGCYCGYPCC</sequence>
<reference key="1">
    <citation type="journal article" date="1988" name="EMBO J.">
        <title>Cis-acting regions sufficient for spermatocyte-specific transcriptional and spermatid-specific translational control of the Drosophila melanogaster gene mst(3)gl-9.</title>
        <authorList>
            <person name="Kuhn R."/>
            <person name="Schaefer U."/>
            <person name="Schaefer M."/>
        </authorList>
    </citation>
    <scope>NUCLEOTIDE SEQUENCE [GENOMIC DNA]</scope>
    <source>
        <strain>Canton-S</strain>
    </source>
</reference>
<reference key="2">
    <citation type="journal article" date="2006" name="Genetics">
        <title>Widespread adaptive evolution of Drosophila genes with sex-biased expression.</title>
        <authorList>
            <person name="Proeschel M."/>
            <person name="Zhang Z."/>
            <person name="Parsch J."/>
        </authorList>
    </citation>
    <scope>NUCLEOTIDE SEQUENCE [GENOMIC DNA]</scope>
    <scope>VARIANTS GLY-PRO-CYS-CYS-18 INS AND TRP-31</scope>
    <source>
        <strain>ZBMEL131</strain>
        <strain>ZBMEL145</strain>
        <strain>ZBMEL157</strain>
        <strain>ZBMEL186</strain>
        <strain>ZBMEL191</strain>
        <strain>ZBMEL229</strain>
        <strain>ZBMEL377</strain>
        <strain>ZBMEL384</strain>
        <strain>ZBMEL398</strain>
        <strain>ZBMEL82</strain>
        <strain>ZBMEL84</strain>
        <strain>ZBMEL95</strain>
    </source>
</reference>
<reference key="3">
    <citation type="journal article" date="2009" name="Mol. Biol. Evol.">
        <title>The influence of demography and weak selection on the McDonald-Kreitman test: an empirical study in Drosophila.</title>
        <authorList>
            <person name="Parsch J."/>
            <person name="Zhang Z."/>
            <person name="Baines J.F."/>
        </authorList>
    </citation>
    <scope>NUCLEOTIDE SEQUENCE [GENOMIC DNA]</scope>
    <scope>VARIANTS ALA-16 AND GLY-PRO-CYS-CYS-18 INS</scope>
    <source>
        <strain>MEL01</strain>
        <strain>MEL02</strain>
        <strain>MEL11</strain>
        <strain>MEL12</strain>
        <strain>MEL13</strain>
        <strain>MEL14</strain>
        <strain>MEL15</strain>
        <strain>MEL16</strain>
        <strain>MEL17</strain>
        <strain>MEL18</strain>
        <strain>MEL19</strain>
        <strain>MEL20</strain>
    </source>
</reference>
<reference key="4">
    <citation type="journal article" date="2000" name="Science">
        <title>The genome sequence of Drosophila melanogaster.</title>
        <authorList>
            <person name="Adams M.D."/>
            <person name="Celniker S.E."/>
            <person name="Holt R.A."/>
            <person name="Evans C.A."/>
            <person name="Gocayne J.D."/>
            <person name="Amanatides P.G."/>
            <person name="Scherer S.E."/>
            <person name="Li P.W."/>
            <person name="Hoskins R.A."/>
            <person name="Galle R.F."/>
            <person name="George R.A."/>
            <person name="Lewis S.E."/>
            <person name="Richards S."/>
            <person name="Ashburner M."/>
            <person name="Henderson S.N."/>
            <person name="Sutton G.G."/>
            <person name="Wortman J.R."/>
            <person name="Yandell M.D."/>
            <person name="Zhang Q."/>
            <person name="Chen L.X."/>
            <person name="Brandon R.C."/>
            <person name="Rogers Y.-H.C."/>
            <person name="Blazej R.G."/>
            <person name="Champe M."/>
            <person name="Pfeiffer B.D."/>
            <person name="Wan K.H."/>
            <person name="Doyle C."/>
            <person name="Baxter E.G."/>
            <person name="Helt G."/>
            <person name="Nelson C.R."/>
            <person name="Miklos G.L.G."/>
            <person name="Abril J.F."/>
            <person name="Agbayani A."/>
            <person name="An H.-J."/>
            <person name="Andrews-Pfannkoch C."/>
            <person name="Baldwin D."/>
            <person name="Ballew R.M."/>
            <person name="Basu A."/>
            <person name="Baxendale J."/>
            <person name="Bayraktaroglu L."/>
            <person name="Beasley E.M."/>
            <person name="Beeson K.Y."/>
            <person name="Benos P.V."/>
            <person name="Berman B.P."/>
            <person name="Bhandari D."/>
            <person name="Bolshakov S."/>
            <person name="Borkova D."/>
            <person name="Botchan M.R."/>
            <person name="Bouck J."/>
            <person name="Brokstein P."/>
            <person name="Brottier P."/>
            <person name="Burtis K.C."/>
            <person name="Busam D.A."/>
            <person name="Butler H."/>
            <person name="Cadieu E."/>
            <person name="Center A."/>
            <person name="Chandra I."/>
            <person name="Cherry J.M."/>
            <person name="Cawley S."/>
            <person name="Dahlke C."/>
            <person name="Davenport L.B."/>
            <person name="Davies P."/>
            <person name="de Pablos B."/>
            <person name="Delcher A."/>
            <person name="Deng Z."/>
            <person name="Mays A.D."/>
            <person name="Dew I."/>
            <person name="Dietz S.M."/>
            <person name="Dodson K."/>
            <person name="Doup L.E."/>
            <person name="Downes M."/>
            <person name="Dugan-Rocha S."/>
            <person name="Dunkov B.C."/>
            <person name="Dunn P."/>
            <person name="Durbin K.J."/>
            <person name="Evangelista C.C."/>
            <person name="Ferraz C."/>
            <person name="Ferriera S."/>
            <person name="Fleischmann W."/>
            <person name="Fosler C."/>
            <person name="Gabrielian A.E."/>
            <person name="Garg N.S."/>
            <person name="Gelbart W.M."/>
            <person name="Glasser K."/>
            <person name="Glodek A."/>
            <person name="Gong F."/>
            <person name="Gorrell J.H."/>
            <person name="Gu Z."/>
            <person name="Guan P."/>
            <person name="Harris M."/>
            <person name="Harris N.L."/>
            <person name="Harvey D.A."/>
            <person name="Heiman T.J."/>
            <person name="Hernandez J.R."/>
            <person name="Houck J."/>
            <person name="Hostin D."/>
            <person name="Houston K.A."/>
            <person name="Howland T.J."/>
            <person name="Wei M.-H."/>
            <person name="Ibegwam C."/>
            <person name="Jalali M."/>
            <person name="Kalush F."/>
            <person name="Karpen G.H."/>
            <person name="Ke Z."/>
            <person name="Kennison J.A."/>
            <person name="Ketchum K.A."/>
            <person name="Kimmel B.E."/>
            <person name="Kodira C.D."/>
            <person name="Kraft C.L."/>
            <person name="Kravitz S."/>
            <person name="Kulp D."/>
            <person name="Lai Z."/>
            <person name="Lasko P."/>
            <person name="Lei Y."/>
            <person name="Levitsky A.A."/>
            <person name="Li J.H."/>
            <person name="Li Z."/>
            <person name="Liang Y."/>
            <person name="Lin X."/>
            <person name="Liu X."/>
            <person name="Mattei B."/>
            <person name="McIntosh T.C."/>
            <person name="McLeod M.P."/>
            <person name="McPherson D."/>
            <person name="Merkulov G."/>
            <person name="Milshina N.V."/>
            <person name="Mobarry C."/>
            <person name="Morris J."/>
            <person name="Moshrefi A."/>
            <person name="Mount S.M."/>
            <person name="Moy M."/>
            <person name="Murphy B."/>
            <person name="Murphy L."/>
            <person name="Muzny D.M."/>
            <person name="Nelson D.L."/>
            <person name="Nelson D.R."/>
            <person name="Nelson K.A."/>
            <person name="Nixon K."/>
            <person name="Nusskern D.R."/>
            <person name="Pacleb J.M."/>
            <person name="Palazzolo M."/>
            <person name="Pittman G.S."/>
            <person name="Pan S."/>
            <person name="Pollard J."/>
            <person name="Puri V."/>
            <person name="Reese M.G."/>
            <person name="Reinert K."/>
            <person name="Remington K."/>
            <person name="Saunders R.D.C."/>
            <person name="Scheeler F."/>
            <person name="Shen H."/>
            <person name="Shue B.C."/>
            <person name="Siden-Kiamos I."/>
            <person name="Simpson M."/>
            <person name="Skupski M.P."/>
            <person name="Smith T.J."/>
            <person name="Spier E."/>
            <person name="Spradling A.C."/>
            <person name="Stapleton M."/>
            <person name="Strong R."/>
            <person name="Sun E."/>
            <person name="Svirskas R."/>
            <person name="Tector C."/>
            <person name="Turner R."/>
            <person name="Venter E."/>
            <person name="Wang A.H."/>
            <person name="Wang X."/>
            <person name="Wang Z.-Y."/>
            <person name="Wassarman D.A."/>
            <person name="Weinstock G.M."/>
            <person name="Weissenbach J."/>
            <person name="Williams S.M."/>
            <person name="Woodage T."/>
            <person name="Worley K.C."/>
            <person name="Wu D."/>
            <person name="Yang S."/>
            <person name="Yao Q.A."/>
            <person name="Ye J."/>
            <person name="Yeh R.-F."/>
            <person name="Zaveri J.S."/>
            <person name="Zhan M."/>
            <person name="Zhang G."/>
            <person name="Zhao Q."/>
            <person name="Zheng L."/>
            <person name="Zheng X.H."/>
            <person name="Zhong F.N."/>
            <person name="Zhong W."/>
            <person name="Zhou X."/>
            <person name="Zhu S.C."/>
            <person name="Zhu X."/>
            <person name="Smith H.O."/>
            <person name="Gibbs R.A."/>
            <person name="Myers E.W."/>
            <person name="Rubin G.M."/>
            <person name="Venter J.C."/>
        </authorList>
    </citation>
    <scope>NUCLEOTIDE SEQUENCE [LARGE SCALE GENOMIC DNA]</scope>
    <source>
        <strain>Berkeley</strain>
    </source>
</reference>
<reference key="5">
    <citation type="journal article" date="2002" name="Genome Biol.">
        <title>Annotation of the Drosophila melanogaster euchromatic genome: a systematic review.</title>
        <authorList>
            <person name="Misra S."/>
            <person name="Crosby M.A."/>
            <person name="Mungall C.J."/>
            <person name="Matthews B.B."/>
            <person name="Campbell K.S."/>
            <person name="Hradecky P."/>
            <person name="Huang Y."/>
            <person name="Kaminker J.S."/>
            <person name="Millburn G.H."/>
            <person name="Prochnik S.E."/>
            <person name="Smith C.D."/>
            <person name="Tupy J.L."/>
            <person name="Whitfield E.J."/>
            <person name="Bayraktaroglu L."/>
            <person name="Berman B.P."/>
            <person name="Bettencourt B.R."/>
            <person name="Celniker S.E."/>
            <person name="de Grey A.D.N.J."/>
            <person name="Drysdale R.A."/>
            <person name="Harris N.L."/>
            <person name="Richter J."/>
            <person name="Russo S."/>
            <person name="Schroeder A.J."/>
            <person name="Shu S.Q."/>
            <person name="Stapleton M."/>
            <person name="Yamada C."/>
            <person name="Ashburner M."/>
            <person name="Gelbart W.M."/>
            <person name="Rubin G.M."/>
            <person name="Lewis S.E."/>
        </authorList>
    </citation>
    <scope>GENOME REANNOTATION</scope>
    <source>
        <strain>Berkeley</strain>
    </source>
</reference>
<reference key="6">
    <citation type="submission" date="2009-01" db="EMBL/GenBank/DDBJ databases">
        <authorList>
            <person name="Carlson J.W."/>
            <person name="Booth B."/>
            <person name="Frise E."/>
            <person name="Park S."/>
            <person name="Wan K.H."/>
            <person name="Yu C."/>
            <person name="Celniker S.E."/>
        </authorList>
    </citation>
    <scope>NUCLEOTIDE SEQUENCE [LARGE SCALE MRNA]</scope>
    <source>
        <strain>Berkeley</strain>
        <tissue>Head</tissue>
    </source>
</reference>
<protein>
    <recommendedName>
        <fullName>Male-specific sperm protein Mst87F</fullName>
    </recommendedName>
</protein>